<organism>
    <name type="scientific">Prochlorococcus marinus (strain MIT 9301)</name>
    <dbReference type="NCBI Taxonomy" id="167546"/>
    <lineage>
        <taxon>Bacteria</taxon>
        <taxon>Bacillati</taxon>
        <taxon>Cyanobacteriota</taxon>
        <taxon>Cyanophyceae</taxon>
        <taxon>Synechococcales</taxon>
        <taxon>Prochlorococcaceae</taxon>
        <taxon>Prochlorococcus</taxon>
    </lineage>
</organism>
<protein>
    <recommendedName>
        <fullName evidence="1">Small ribosomal subunit protein uS14</fullName>
    </recommendedName>
    <alternativeName>
        <fullName evidence="2">30S ribosomal protein S14</fullName>
    </alternativeName>
</protein>
<sequence length="100" mass="11656">MAKKSMIAREVKRKKLVKKYAAKRKSLLDEFNAAKDPMERLEIHRKIQGLPRNSAPNRVRNRCWATGKPRGVYRDFGLCRNQLRQRAHNGELPGLVKSSW</sequence>
<feature type="chain" id="PRO_1000128496" description="Small ribosomal subunit protein uS14">
    <location>
        <begin position="1"/>
        <end position="100"/>
    </location>
</feature>
<dbReference type="EMBL" id="CP000576">
    <property type="protein sequence ID" value="ABO18014.1"/>
    <property type="molecule type" value="Genomic_DNA"/>
</dbReference>
<dbReference type="RefSeq" id="WP_011863323.1">
    <property type="nucleotide sequence ID" value="NC_009091.1"/>
</dbReference>
<dbReference type="SMR" id="A3PE39"/>
<dbReference type="STRING" id="167546.P9301_13911"/>
<dbReference type="KEGG" id="pmg:P9301_13911"/>
<dbReference type="eggNOG" id="COG0199">
    <property type="taxonomic scope" value="Bacteria"/>
</dbReference>
<dbReference type="HOGENOM" id="CLU_139869_0_1_3"/>
<dbReference type="OrthoDB" id="9810484at2"/>
<dbReference type="Proteomes" id="UP000001430">
    <property type="component" value="Chromosome"/>
</dbReference>
<dbReference type="GO" id="GO:0005737">
    <property type="term" value="C:cytoplasm"/>
    <property type="evidence" value="ECO:0007669"/>
    <property type="project" value="UniProtKB-ARBA"/>
</dbReference>
<dbReference type="GO" id="GO:0015935">
    <property type="term" value="C:small ribosomal subunit"/>
    <property type="evidence" value="ECO:0007669"/>
    <property type="project" value="TreeGrafter"/>
</dbReference>
<dbReference type="GO" id="GO:0019843">
    <property type="term" value="F:rRNA binding"/>
    <property type="evidence" value="ECO:0007669"/>
    <property type="project" value="UniProtKB-UniRule"/>
</dbReference>
<dbReference type="GO" id="GO:0003735">
    <property type="term" value="F:structural constituent of ribosome"/>
    <property type="evidence" value="ECO:0007669"/>
    <property type="project" value="InterPro"/>
</dbReference>
<dbReference type="GO" id="GO:0006412">
    <property type="term" value="P:translation"/>
    <property type="evidence" value="ECO:0007669"/>
    <property type="project" value="UniProtKB-UniRule"/>
</dbReference>
<dbReference type="FunFam" id="1.10.287.1480:FF:000001">
    <property type="entry name" value="30S ribosomal protein S14"/>
    <property type="match status" value="1"/>
</dbReference>
<dbReference type="Gene3D" id="1.10.287.1480">
    <property type="match status" value="1"/>
</dbReference>
<dbReference type="HAMAP" id="MF_00537">
    <property type="entry name" value="Ribosomal_uS14_1"/>
    <property type="match status" value="1"/>
</dbReference>
<dbReference type="InterPro" id="IPR001209">
    <property type="entry name" value="Ribosomal_uS14"/>
</dbReference>
<dbReference type="InterPro" id="IPR023036">
    <property type="entry name" value="Ribosomal_uS14_bac/plastid"/>
</dbReference>
<dbReference type="InterPro" id="IPR018271">
    <property type="entry name" value="Ribosomal_uS14_CS"/>
</dbReference>
<dbReference type="NCBIfam" id="NF006477">
    <property type="entry name" value="PRK08881.1"/>
    <property type="match status" value="1"/>
</dbReference>
<dbReference type="PANTHER" id="PTHR19836">
    <property type="entry name" value="30S RIBOSOMAL PROTEIN S14"/>
    <property type="match status" value="1"/>
</dbReference>
<dbReference type="PANTHER" id="PTHR19836:SF19">
    <property type="entry name" value="SMALL RIBOSOMAL SUBUNIT PROTEIN US14M"/>
    <property type="match status" value="1"/>
</dbReference>
<dbReference type="Pfam" id="PF00253">
    <property type="entry name" value="Ribosomal_S14"/>
    <property type="match status" value="1"/>
</dbReference>
<dbReference type="SUPFAM" id="SSF57716">
    <property type="entry name" value="Glucocorticoid receptor-like (DNA-binding domain)"/>
    <property type="match status" value="1"/>
</dbReference>
<dbReference type="PROSITE" id="PS00527">
    <property type="entry name" value="RIBOSOMAL_S14"/>
    <property type="match status" value="1"/>
</dbReference>
<reference key="1">
    <citation type="journal article" date="2007" name="PLoS Genet.">
        <title>Patterns and implications of gene gain and loss in the evolution of Prochlorococcus.</title>
        <authorList>
            <person name="Kettler G.C."/>
            <person name="Martiny A.C."/>
            <person name="Huang K."/>
            <person name="Zucker J."/>
            <person name="Coleman M.L."/>
            <person name="Rodrigue S."/>
            <person name="Chen F."/>
            <person name="Lapidus A."/>
            <person name="Ferriera S."/>
            <person name="Johnson J."/>
            <person name="Steglich C."/>
            <person name="Church G.M."/>
            <person name="Richardson P."/>
            <person name="Chisholm S.W."/>
        </authorList>
    </citation>
    <scope>NUCLEOTIDE SEQUENCE [LARGE SCALE GENOMIC DNA]</scope>
    <source>
        <strain>MIT 9301</strain>
    </source>
</reference>
<gene>
    <name evidence="1" type="primary">rpsN</name>
    <name evidence="1" type="synonym">rps14</name>
    <name type="ordered locus">P9301_13911</name>
</gene>
<proteinExistence type="inferred from homology"/>
<name>RS14_PROM0</name>
<comment type="function">
    <text evidence="1">Binds 16S rRNA, required for the assembly of 30S particles and may also be responsible for determining the conformation of the 16S rRNA at the A site.</text>
</comment>
<comment type="subunit">
    <text evidence="1">Part of the 30S ribosomal subunit. Contacts proteins S3 and S10.</text>
</comment>
<comment type="similarity">
    <text evidence="1">Belongs to the universal ribosomal protein uS14 family.</text>
</comment>
<keyword id="KW-1185">Reference proteome</keyword>
<keyword id="KW-0687">Ribonucleoprotein</keyword>
<keyword id="KW-0689">Ribosomal protein</keyword>
<keyword id="KW-0694">RNA-binding</keyword>
<keyword id="KW-0699">rRNA-binding</keyword>
<accession>A3PE39</accession>
<evidence type="ECO:0000255" key="1">
    <source>
        <dbReference type="HAMAP-Rule" id="MF_00537"/>
    </source>
</evidence>
<evidence type="ECO:0000305" key="2"/>